<sequence length="217" mass="25171">MSNTTIGKFITFEGNEGSGKTTQSKLLYEKLLDNGIKAVWTREIGGTDIAELIRDIVLFKDMSITTELLLIMAARYEHIEKFIRPNLNEGKWVICDRFIDSTLCYQSENSEEQQLILELHRKLLDNFFPDLTLIINVSPSIAMQRIKIREIHKNTNQLNKFDSRNQQFHQKITDAFIQVSKLFPERIVQINGEPMIEDVSSEVINIINNKMKVNLLR</sequence>
<protein>
    <recommendedName>
        <fullName evidence="1">Thymidylate kinase</fullName>
        <ecNumber evidence="1">2.7.4.9</ecNumber>
    </recommendedName>
    <alternativeName>
        <fullName evidence="1">dTMP kinase</fullName>
    </alternativeName>
</protein>
<reference key="1">
    <citation type="journal article" date="2008" name="DNA Res.">
        <title>The whole-genome sequencing of the obligate intracellular bacterium Orientia tsutsugamushi revealed massive gene amplification during reductive genome evolution.</title>
        <authorList>
            <person name="Nakayama K."/>
            <person name="Yamashita A."/>
            <person name="Kurokawa K."/>
            <person name="Morimoto T."/>
            <person name="Ogawa M."/>
            <person name="Fukuhara M."/>
            <person name="Urakami H."/>
            <person name="Ohnishi M."/>
            <person name="Uchiyama I."/>
            <person name="Ogura Y."/>
            <person name="Ooka T."/>
            <person name="Oshima K."/>
            <person name="Tamura A."/>
            <person name="Hattori M."/>
            <person name="Hayashi T."/>
        </authorList>
    </citation>
    <scope>NUCLEOTIDE SEQUENCE [LARGE SCALE GENOMIC DNA]</scope>
    <source>
        <strain>Ikeda</strain>
    </source>
</reference>
<feature type="chain" id="PRO_1000097416" description="Thymidylate kinase">
    <location>
        <begin position="1"/>
        <end position="217"/>
    </location>
</feature>
<feature type="binding site" evidence="1">
    <location>
        <begin position="14"/>
        <end position="21"/>
    </location>
    <ligand>
        <name>ATP</name>
        <dbReference type="ChEBI" id="CHEBI:30616"/>
    </ligand>
</feature>
<accession>B3CR61</accession>
<proteinExistence type="inferred from homology"/>
<comment type="function">
    <text evidence="1">Phosphorylation of dTMP to form dTDP in both de novo and salvage pathways of dTTP synthesis.</text>
</comment>
<comment type="catalytic activity">
    <reaction evidence="1">
        <text>dTMP + ATP = dTDP + ADP</text>
        <dbReference type="Rhea" id="RHEA:13517"/>
        <dbReference type="ChEBI" id="CHEBI:30616"/>
        <dbReference type="ChEBI" id="CHEBI:58369"/>
        <dbReference type="ChEBI" id="CHEBI:63528"/>
        <dbReference type="ChEBI" id="CHEBI:456216"/>
        <dbReference type="EC" id="2.7.4.9"/>
    </reaction>
</comment>
<comment type="similarity">
    <text evidence="1">Belongs to the thymidylate kinase family.</text>
</comment>
<dbReference type="EC" id="2.7.4.9" evidence="1"/>
<dbReference type="EMBL" id="AP008981">
    <property type="protein sequence ID" value="BAG39968.1"/>
    <property type="molecule type" value="Genomic_DNA"/>
</dbReference>
<dbReference type="RefSeq" id="WP_012461164.1">
    <property type="nucleotide sequence ID" value="NC_010793.1"/>
</dbReference>
<dbReference type="SMR" id="B3CR61"/>
<dbReference type="KEGG" id="ott:OTT_0510"/>
<dbReference type="HOGENOM" id="CLU_049131_0_2_5"/>
<dbReference type="OrthoDB" id="9774907at2"/>
<dbReference type="Proteomes" id="UP000001033">
    <property type="component" value="Chromosome"/>
</dbReference>
<dbReference type="GO" id="GO:0005829">
    <property type="term" value="C:cytosol"/>
    <property type="evidence" value="ECO:0007669"/>
    <property type="project" value="TreeGrafter"/>
</dbReference>
<dbReference type="GO" id="GO:0005524">
    <property type="term" value="F:ATP binding"/>
    <property type="evidence" value="ECO:0007669"/>
    <property type="project" value="UniProtKB-UniRule"/>
</dbReference>
<dbReference type="GO" id="GO:0004798">
    <property type="term" value="F:dTMP kinase activity"/>
    <property type="evidence" value="ECO:0007669"/>
    <property type="project" value="UniProtKB-UniRule"/>
</dbReference>
<dbReference type="GO" id="GO:0006233">
    <property type="term" value="P:dTDP biosynthetic process"/>
    <property type="evidence" value="ECO:0007669"/>
    <property type="project" value="InterPro"/>
</dbReference>
<dbReference type="GO" id="GO:0006235">
    <property type="term" value="P:dTTP biosynthetic process"/>
    <property type="evidence" value="ECO:0007669"/>
    <property type="project" value="UniProtKB-UniRule"/>
</dbReference>
<dbReference type="GO" id="GO:0006227">
    <property type="term" value="P:dUDP biosynthetic process"/>
    <property type="evidence" value="ECO:0007669"/>
    <property type="project" value="TreeGrafter"/>
</dbReference>
<dbReference type="CDD" id="cd01672">
    <property type="entry name" value="TMPK"/>
    <property type="match status" value="1"/>
</dbReference>
<dbReference type="FunFam" id="3.40.50.300:FF:000225">
    <property type="entry name" value="Thymidylate kinase"/>
    <property type="match status" value="1"/>
</dbReference>
<dbReference type="Gene3D" id="3.40.50.300">
    <property type="entry name" value="P-loop containing nucleotide triphosphate hydrolases"/>
    <property type="match status" value="1"/>
</dbReference>
<dbReference type="HAMAP" id="MF_00165">
    <property type="entry name" value="Thymidylate_kinase"/>
    <property type="match status" value="1"/>
</dbReference>
<dbReference type="InterPro" id="IPR027417">
    <property type="entry name" value="P-loop_NTPase"/>
</dbReference>
<dbReference type="InterPro" id="IPR039430">
    <property type="entry name" value="Thymidylate_kin-like_dom"/>
</dbReference>
<dbReference type="InterPro" id="IPR018095">
    <property type="entry name" value="Thymidylate_kin_CS"/>
</dbReference>
<dbReference type="InterPro" id="IPR018094">
    <property type="entry name" value="Thymidylate_kinase"/>
</dbReference>
<dbReference type="NCBIfam" id="TIGR00041">
    <property type="entry name" value="DTMP_kinase"/>
    <property type="match status" value="1"/>
</dbReference>
<dbReference type="PANTHER" id="PTHR10344">
    <property type="entry name" value="THYMIDYLATE KINASE"/>
    <property type="match status" value="1"/>
</dbReference>
<dbReference type="PANTHER" id="PTHR10344:SF4">
    <property type="entry name" value="UMP-CMP KINASE 2, MITOCHONDRIAL"/>
    <property type="match status" value="1"/>
</dbReference>
<dbReference type="Pfam" id="PF02223">
    <property type="entry name" value="Thymidylate_kin"/>
    <property type="match status" value="1"/>
</dbReference>
<dbReference type="SUPFAM" id="SSF52540">
    <property type="entry name" value="P-loop containing nucleoside triphosphate hydrolases"/>
    <property type="match status" value="1"/>
</dbReference>
<dbReference type="PROSITE" id="PS01331">
    <property type="entry name" value="THYMIDYLATE_KINASE"/>
    <property type="match status" value="1"/>
</dbReference>
<gene>
    <name evidence="1" type="primary">tmk</name>
    <name type="ordered locus">OTT_0510</name>
</gene>
<name>KTHY_ORITI</name>
<keyword id="KW-0067">ATP-binding</keyword>
<keyword id="KW-0418">Kinase</keyword>
<keyword id="KW-0545">Nucleotide biosynthesis</keyword>
<keyword id="KW-0547">Nucleotide-binding</keyword>
<keyword id="KW-0808">Transferase</keyword>
<organism>
    <name type="scientific">Orientia tsutsugamushi (strain Ikeda)</name>
    <name type="common">Rickettsia tsutsugamushi</name>
    <dbReference type="NCBI Taxonomy" id="334380"/>
    <lineage>
        <taxon>Bacteria</taxon>
        <taxon>Pseudomonadati</taxon>
        <taxon>Pseudomonadota</taxon>
        <taxon>Alphaproteobacteria</taxon>
        <taxon>Rickettsiales</taxon>
        <taxon>Rickettsiaceae</taxon>
        <taxon>Rickettsieae</taxon>
        <taxon>Orientia</taxon>
    </lineage>
</organism>
<evidence type="ECO:0000255" key="1">
    <source>
        <dbReference type="HAMAP-Rule" id="MF_00165"/>
    </source>
</evidence>